<feature type="chain" id="PRO_0000252581" description="Gamma-glutamyl phosphate reductase">
    <location>
        <begin position="1"/>
        <end position="425"/>
    </location>
</feature>
<organism>
    <name type="scientific">Novosphingobium aromaticivorans (strain ATCC 700278 / DSM 12444 / CCUG 56034 / CIP 105152 / NBRC 16084 / F199)</name>
    <dbReference type="NCBI Taxonomy" id="279238"/>
    <lineage>
        <taxon>Bacteria</taxon>
        <taxon>Pseudomonadati</taxon>
        <taxon>Pseudomonadota</taxon>
        <taxon>Alphaproteobacteria</taxon>
        <taxon>Sphingomonadales</taxon>
        <taxon>Sphingomonadaceae</taxon>
        <taxon>Novosphingobium</taxon>
    </lineage>
</organism>
<sequence length="425" mass="43784">MSTQPATIADSATDLVEGLARAARSAQRQLARMDSPVKERALTLAAAALRAAEAEILAANAQDMANGAANGLSSAMLDRLKLTPERLAGIADAVAQVAGLADPVGEVISEAARPNGMVLQRVRIPVGVIGIIYESRPNVTADAAALCVRSGNAAILRGGSEAVHSNRAIHKALVAGLAEGGVPAEAVQLVPTQDRAAVGAMLGAAGLIDMIVPRGGKSLVARVQADARVPVLAHLDGINHTFVHASADPAMAQAIVLNAKMRRTGVCGAMETLLIDATYPDPHGLVEPLLDAGCELRGDARARAIDPRIAPAADNDWDTEYLEAILSVAVVDGLDEALAHIARHASGHTDAIVAADQDVADRFLAEVDSAIVMHNASSQFADGGEFGLGAEIGIATGRLHARGPVALEGLTTYKWLVRGSGQTRP</sequence>
<protein>
    <recommendedName>
        <fullName evidence="1">Gamma-glutamyl phosphate reductase</fullName>
        <shortName evidence="1">GPR</shortName>
        <ecNumber evidence="1">1.2.1.41</ecNumber>
    </recommendedName>
    <alternativeName>
        <fullName evidence="1">Glutamate-5-semialdehyde dehydrogenase</fullName>
    </alternativeName>
    <alternativeName>
        <fullName evidence="1">Glutamyl-gamma-semialdehyde dehydrogenase</fullName>
        <shortName evidence="1">GSA dehydrogenase</shortName>
    </alternativeName>
</protein>
<dbReference type="EC" id="1.2.1.41" evidence="1"/>
<dbReference type="EMBL" id="CP000248">
    <property type="protein sequence ID" value="ABD24509.1"/>
    <property type="molecule type" value="Genomic_DNA"/>
</dbReference>
<dbReference type="RefSeq" id="WP_011443723.1">
    <property type="nucleotide sequence ID" value="NC_007794.1"/>
</dbReference>
<dbReference type="SMR" id="Q2GCB4"/>
<dbReference type="STRING" id="279238.Saro_0060"/>
<dbReference type="KEGG" id="nar:Saro_0060"/>
<dbReference type="eggNOG" id="COG0014">
    <property type="taxonomic scope" value="Bacteria"/>
</dbReference>
<dbReference type="HOGENOM" id="CLU_030231_0_0_5"/>
<dbReference type="UniPathway" id="UPA00098">
    <property type="reaction ID" value="UER00360"/>
</dbReference>
<dbReference type="Proteomes" id="UP000009134">
    <property type="component" value="Chromosome"/>
</dbReference>
<dbReference type="GO" id="GO:0005737">
    <property type="term" value="C:cytoplasm"/>
    <property type="evidence" value="ECO:0007669"/>
    <property type="project" value="UniProtKB-SubCell"/>
</dbReference>
<dbReference type="GO" id="GO:0004350">
    <property type="term" value="F:glutamate-5-semialdehyde dehydrogenase activity"/>
    <property type="evidence" value="ECO:0007669"/>
    <property type="project" value="UniProtKB-UniRule"/>
</dbReference>
<dbReference type="GO" id="GO:0050661">
    <property type="term" value="F:NADP binding"/>
    <property type="evidence" value="ECO:0007669"/>
    <property type="project" value="InterPro"/>
</dbReference>
<dbReference type="GO" id="GO:0055129">
    <property type="term" value="P:L-proline biosynthetic process"/>
    <property type="evidence" value="ECO:0007669"/>
    <property type="project" value="UniProtKB-UniRule"/>
</dbReference>
<dbReference type="CDD" id="cd07079">
    <property type="entry name" value="ALDH_F18-19_ProA-GPR"/>
    <property type="match status" value="1"/>
</dbReference>
<dbReference type="Gene3D" id="3.40.605.10">
    <property type="entry name" value="Aldehyde Dehydrogenase, Chain A, domain 1"/>
    <property type="match status" value="1"/>
</dbReference>
<dbReference type="Gene3D" id="3.40.309.10">
    <property type="entry name" value="Aldehyde Dehydrogenase, Chain A, domain 2"/>
    <property type="match status" value="1"/>
</dbReference>
<dbReference type="HAMAP" id="MF_00412">
    <property type="entry name" value="ProA"/>
    <property type="match status" value="1"/>
</dbReference>
<dbReference type="InterPro" id="IPR016161">
    <property type="entry name" value="Ald_DH/histidinol_DH"/>
</dbReference>
<dbReference type="InterPro" id="IPR016163">
    <property type="entry name" value="Ald_DH_C"/>
</dbReference>
<dbReference type="InterPro" id="IPR016162">
    <property type="entry name" value="Ald_DH_N"/>
</dbReference>
<dbReference type="InterPro" id="IPR015590">
    <property type="entry name" value="Aldehyde_DH_dom"/>
</dbReference>
<dbReference type="InterPro" id="IPR012134">
    <property type="entry name" value="Glu-5-SA_DH"/>
</dbReference>
<dbReference type="InterPro" id="IPR000965">
    <property type="entry name" value="GPR_dom"/>
</dbReference>
<dbReference type="NCBIfam" id="NF001221">
    <property type="entry name" value="PRK00197.1"/>
    <property type="match status" value="1"/>
</dbReference>
<dbReference type="NCBIfam" id="TIGR00407">
    <property type="entry name" value="proA"/>
    <property type="match status" value="1"/>
</dbReference>
<dbReference type="PANTHER" id="PTHR11063:SF8">
    <property type="entry name" value="DELTA-1-PYRROLINE-5-CARBOXYLATE SYNTHASE"/>
    <property type="match status" value="1"/>
</dbReference>
<dbReference type="PANTHER" id="PTHR11063">
    <property type="entry name" value="GLUTAMATE SEMIALDEHYDE DEHYDROGENASE"/>
    <property type="match status" value="1"/>
</dbReference>
<dbReference type="Pfam" id="PF00171">
    <property type="entry name" value="Aldedh"/>
    <property type="match status" value="1"/>
</dbReference>
<dbReference type="PIRSF" id="PIRSF000151">
    <property type="entry name" value="GPR"/>
    <property type="match status" value="1"/>
</dbReference>
<dbReference type="SUPFAM" id="SSF53720">
    <property type="entry name" value="ALDH-like"/>
    <property type="match status" value="1"/>
</dbReference>
<keyword id="KW-0028">Amino-acid biosynthesis</keyword>
<keyword id="KW-0963">Cytoplasm</keyword>
<keyword id="KW-0521">NADP</keyword>
<keyword id="KW-0560">Oxidoreductase</keyword>
<keyword id="KW-0641">Proline biosynthesis</keyword>
<keyword id="KW-1185">Reference proteome</keyword>
<proteinExistence type="inferred from homology"/>
<reference key="1">
    <citation type="submission" date="2006-01" db="EMBL/GenBank/DDBJ databases">
        <title>Complete sequence of Novosphingobium aromaticivorans DSM 12444.</title>
        <authorList>
            <consortium name="US DOE Joint Genome Institute"/>
            <person name="Copeland A."/>
            <person name="Lucas S."/>
            <person name="Lapidus A."/>
            <person name="Barry K."/>
            <person name="Detter J.C."/>
            <person name="Glavina T."/>
            <person name="Hammon N."/>
            <person name="Israni S."/>
            <person name="Pitluck S."/>
            <person name="Chain P."/>
            <person name="Malfatti S."/>
            <person name="Shin M."/>
            <person name="Vergez L."/>
            <person name="Schmutz J."/>
            <person name="Larimer F."/>
            <person name="Land M."/>
            <person name="Kyrpides N."/>
            <person name="Ivanova N."/>
            <person name="Fredrickson J."/>
            <person name="Balkwill D."/>
            <person name="Romine M.F."/>
            <person name="Richardson P."/>
        </authorList>
    </citation>
    <scope>NUCLEOTIDE SEQUENCE [LARGE SCALE GENOMIC DNA]</scope>
    <source>
        <strain>ATCC 700278 / DSM 12444 / CCUG 56034 / CIP 105152 / NBRC 16084 / F199</strain>
    </source>
</reference>
<gene>
    <name evidence="1" type="primary">proA</name>
    <name type="ordered locus">Saro_0060</name>
</gene>
<evidence type="ECO:0000255" key="1">
    <source>
        <dbReference type="HAMAP-Rule" id="MF_00412"/>
    </source>
</evidence>
<comment type="function">
    <text evidence="1">Catalyzes the NADPH-dependent reduction of L-glutamate 5-phosphate into L-glutamate 5-semialdehyde and phosphate. The product spontaneously undergoes cyclization to form 1-pyrroline-5-carboxylate.</text>
</comment>
<comment type="catalytic activity">
    <reaction evidence="1">
        <text>L-glutamate 5-semialdehyde + phosphate + NADP(+) = L-glutamyl 5-phosphate + NADPH + H(+)</text>
        <dbReference type="Rhea" id="RHEA:19541"/>
        <dbReference type="ChEBI" id="CHEBI:15378"/>
        <dbReference type="ChEBI" id="CHEBI:43474"/>
        <dbReference type="ChEBI" id="CHEBI:57783"/>
        <dbReference type="ChEBI" id="CHEBI:58066"/>
        <dbReference type="ChEBI" id="CHEBI:58274"/>
        <dbReference type="ChEBI" id="CHEBI:58349"/>
        <dbReference type="EC" id="1.2.1.41"/>
    </reaction>
</comment>
<comment type="pathway">
    <text evidence="1">Amino-acid biosynthesis; L-proline biosynthesis; L-glutamate 5-semialdehyde from L-glutamate: step 2/2.</text>
</comment>
<comment type="subcellular location">
    <subcellularLocation>
        <location evidence="1">Cytoplasm</location>
    </subcellularLocation>
</comment>
<comment type="similarity">
    <text evidence="1">Belongs to the gamma-glutamyl phosphate reductase family.</text>
</comment>
<name>PROA_NOVAD</name>
<accession>Q2GCB4</accession>